<keyword id="KW-0406">Ion transport</keyword>
<keyword id="KW-0408">Iron</keyword>
<keyword id="KW-0410">Iron transport</keyword>
<keyword id="KW-0479">Metal-binding</keyword>
<keyword id="KW-0574">Periplasm</keyword>
<keyword id="KW-1185">Reference proteome</keyword>
<keyword id="KW-0732">Signal</keyword>
<keyword id="KW-0813">Transport</keyword>
<gene>
    <name type="primary">fbpA</name>
    <name type="synonym">fbp</name>
    <name type="ordered locus">NMB0634</name>
</gene>
<comment type="function">
    <text evidence="1">This protein may be a central component in the iron-acquisition system.</text>
</comment>
<comment type="subcellular location">
    <subcellularLocation>
        <location evidence="1">Periplasm</location>
    </subcellularLocation>
</comment>
<comment type="miscellaneous">
    <text>Present in outer membrane vesicle formulations which are used as vaccines in human.</text>
</comment>
<comment type="similarity">
    <text evidence="2">Belongs to the bacterial solute-binding protein 1 family.</text>
</comment>
<feature type="signal peptide" evidence="1">
    <location>
        <begin position="1"/>
        <end position="22"/>
    </location>
</feature>
<feature type="chain" id="PRO_0000031692" description="Major ferric iron-binding protein">
    <location>
        <begin position="23"/>
        <end position="331"/>
    </location>
</feature>
<feature type="binding site" evidence="1">
    <location>
        <position position="31"/>
    </location>
    <ligand>
        <name>Fe cation</name>
        <dbReference type="ChEBI" id="CHEBI:24875"/>
    </ligand>
</feature>
<feature type="binding site" evidence="1">
    <location>
        <position position="79"/>
    </location>
    <ligand>
        <name>Fe cation</name>
        <dbReference type="ChEBI" id="CHEBI:24875"/>
    </ligand>
</feature>
<feature type="binding site" evidence="1">
    <location>
        <position position="217"/>
    </location>
    <ligand>
        <name>Fe cation</name>
        <dbReference type="ChEBI" id="CHEBI:24875"/>
    </ligand>
</feature>
<feature type="binding site" evidence="1">
    <location>
        <position position="218"/>
    </location>
    <ligand>
        <name>Fe cation</name>
        <dbReference type="ChEBI" id="CHEBI:24875"/>
    </ligand>
</feature>
<organism>
    <name type="scientific">Neisseria meningitidis serogroup B (strain ATCC BAA-335 / MC58)</name>
    <dbReference type="NCBI Taxonomy" id="122586"/>
    <lineage>
        <taxon>Bacteria</taxon>
        <taxon>Pseudomonadati</taxon>
        <taxon>Pseudomonadota</taxon>
        <taxon>Betaproteobacteria</taxon>
        <taxon>Neisseriales</taxon>
        <taxon>Neisseriaceae</taxon>
        <taxon>Neisseria</taxon>
    </lineage>
</organism>
<proteinExistence type="evidence at protein level"/>
<protein>
    <recommendedName>
        <fullName>Major ferric iron-binding protein</fullName>
        <shortName>FBP</shortName>
    </recommendedName>
    <alternativeName>
        <fullName>Iron(III) periplasmic-binding protein</fullName>
    </alternativeName>
    <alternativeName>
        <fullName>Major iron-regulated protein</fullName>
        <shortName>MIRP</shortName>
    </alternativeName>
</protein>
<sequence>MKTSIRYALLAAALTAATPALADITVYNGQHKEAAQAVADAFTRATGIKVKLNSAKGDQLAGQIKEEGSRSPADVFYSEQIPALATLSAANLLEPLPASTINETRGKGVPVAAKKDWVALSGRSRVVVYDTRKLSEKDLEKSVLNYATPKWKNRIGYAPTSGAFLEQVVAIVKLKGEAAALKWLKGLKEYGKPYAKNSVALQAVENGEIDAALINNYYWHAFAREKGVQNVHTRLNFVRHRDPGALVTYSGAAVLKSSQNKDEAKKFVAFLASKEGQRALTAVRAEYPLNPHVVSTFNLEPIAKLEAPQVSATTVSEKEHATRLLEQAGMK</sequence>
<accession>P0A0Y4</accession>
<accession>P17940</accession>
<name>FBPA_NEIMB</name>
<evidence type="ECO:0000250" key="1"/>
<evidence type="ECO:0000305" key="2"/>
<reference key="1">
    <citation type="journal article" date="2000" name="Science">
        <title>Complete genome sequence of Neisseria meningitidis serogroup B strain MC58.</title>
        <authorList>
            <person name="Tettelin H."/>
            <person name="Saunders N.J."/>
            <person name="Heidelberg J.F."/>
            <person name="Jeffries A.C."/>
            <person name="Nelson K.E."/>
            <person name="Eisen J.A."/>
            <person name="Ketchum K.A."/>
            <person name="Hood D.W."/>
            <person name="Peden J.F."/>
            <person name="Dodson R.J."/>
            <person name="Nelson W.C."/>
            <person name="Gwinn M.L."/>
            <person name="DeBoy R.T."/>
            <person name="Peterson J.D."/>
            <person name="Hickey E.K."/>
            <person name="Haft D.H."/>
            <person name="Salzberg S.L."/>
            <person name="White O."/>
            <person name="Fleischmann R.D."/>
            <person name="Dougherty B.A."/>
            <person name="Mason T.M."/>
            <person name="Ciecko A."/>
            <person name="Parksey D.S."/>
            <person name="Blair E."/>
            <person name="Cittone H."/>
            <person name="Clark E.B."/>
            <person name="Cotton M.D."/>
            <person name="Utterback T.R."/>
            <person name="Khouri H.M."/>
            <person name="Qin H."/>
            <person name="Vamathevan J.J."/>
            <person name="Gill J."/>
            <person name="Scarlato V."/>
            <person name="Masignani V."/>
            <person name="Pizza M."/>
            <person name="Grandi G."/>
            <person name="Sun L."/>
            <person name="Smith H.O."/>
            <person name="Fraser C.M."/>
            <person name="Moxon E.R."/>
            <person name="Rappuoli R."/>
            <person name="Venter J.C."/>
        </authorList>
    </citation>
    <scope>NUCLEOTIDE SEQUENCE [LARGE SCALE GENOMIC DNA]</scope>
    <source>
        <strain>ATCC BAA-335 / MC58</strain>
    </source>
</reference>
<reference key="2">
    <citation type="journal article" date="2005" name="Hum. Vaccin.">
        <title>Characterization of the protein content of a meningococcal outer membrane vesicle vaccine by polyacrylamide gel electrophoresis and mass spectrometry.</title>
        <authorList>
            <person name="Vipond C."/>
            <person name="Wheeler J.X."/>
            <person name="Jones C."/>
            <person name="Feavers I.M."/>
            <person name="Suker J."/>
        </authorList>
    </citation>
    <scope>IDENTIFICATION BY MASS SPECTROMETRY [LARGE SCALE ANALYSIS]</scope>
</reference>
<reference key="3">
    <citation type="journal article" date="2006" name="Proteomics">
        <title>Proteomic analysis of a meningococcal outer membrane vesicle vaccine prepared from the group B strain NZ98/254.</title>
        <authorList>
            <person name="Vipond C."/>
            <person name="Suker J."/>
            <person name="Jones C."/>
            <person name="Tang C."/>
            <person name="Feavers I.M."/>
            <person name="Wheeler J.X."/>
        </authorList>
    </citation>
    <scope>IDENTIFICATION BY MASS SPECTROMETRY [LARGE SCALE ANALYSIS]</scope>
    <source>
        <strain>NZ98/254 / Serogroup B</strain>
    </source>
</reference>
<dbReference type="EMBL" id="AE002098">
    <property type="protein sequence ID" value="AAF41057.1"/>
    <property type="molecule type" value="Genomic_DNA"/>
</dbReference>
<dbReference type="PIR" id="D81177">
    <property type="entry name" value="D81177"/>
</dbReference>
<dbReference type="RefSeq" id="NP_273677.1">
    <property type="nucleotide sequence ID" value="NC_003112.2"/>
</dbReference>
<dbReference type="RefSeq" id="WP_002214250.1">
    <property type="nucleotide sequence ID" value="NC_003112.2"/>
</dbReference>
<dbReference type="SMR" id="P0A0Y4"/>
<dbReference type="STRING" id="122586.NMB0634"/>
<dbReference type="PaxDb" id="122586-NMB0634"/>
<dbReference type="KEGG" id="nme:NMB0634"/>
<dbReference type="PATRIC" id="fig|122586.8.peg.802"/>
<dbReference type="HOGENOM" id="CLU_026974_2_0_4"/>
<dbReference type="InParanoid" id="P0A0Y4"/>
<dbReference type="OrthoDB" id="9769567at2"/>
<dbReference type="Proteomes" id="UP000000425">
    <property type="component" value="Chromosome"/>
</dbReference>
<dbReference type="GO" id="GO:0042597">
    <property type="term" value="C:periplasmic space"/>
    <property type="evidence" value="ECO:0007669"/>
    <property type="project" value="UniProtKB-SubCell"/>
</dbReference>
<dbReference type="GO" id="GO:0046872">
    <property type="term" value="F:metal ion binding"/>
    <property type="evidence" value="ECO:0007669"/>
    <property type="project" value="UniProtKB-KW"/>
</dbReference>
<dbReference type="GO" id="GO:0006826">
    <property type="term" value="P:iron ion transport"/>
    <property type="evidence" value="ECO:0007669"/>
    <property type="project" value="UniProtKB-KW"/>
</dbReference>
<dbReference type="GO" id="GO:0055085">
    <property type="term" value="P:transmembrane transport"/>
    <property type="evidence" value="ECO:0007669"/>
    <property type="project" value="InterPro"/>
</dbReference>
<dbReference type="CDD" id="cd13543">
    <property type="entry name" value="PBP2_Fbp"/>
    <property type="match status" value="1"/>
</dbReference>
<dbReference type="Gene3D" id="3.40.190.10">
    <property type="entry name" value="Periplasmic binding protein-like II"/>
    <property type="match status" value="2"/>
</dbReference>
<dbReference type="InterPro" id="IPR026045">
    <property type="entry name" value="Ferric-bd"/>
</dbReference>
<dbReference type="InterPro" id="IPR006059">
    <property type="entry name" value="SBP"/>
</dbReference>
<dbReference type="InterPro" id="IPR006061">
    <property type="entry name" value="SBP_1_CS"/>
</dbReference>
<dbReference type="PANTHER" id="PTHR30006:SF15">
    <property type="entry name" value="IRON-UTILIZATION PERIPLASMIC PROTEIN"/>
    <property type="match status" value="1"/>
</dbReference>
<dbReference type="PANTHER" id="PTHR30006">
    <property type="entry name" value="THIAMINE-BINDING PERIPLASMIC PROTEIN-RELATED"/>
    <property type="match status" value="1"/>
</dbReference>
<dbReference type="Pfam" id="PF01547">
    <property type="entry name" value="SBP_bac_1"/>
    <property type="match status" value="1"/>
</dbReference>
<dbReference type="PIRSF" id="PIRSF002825">
    <property type="entry name" value="CfbpA"/>
    <property type="match status" value="1"/>
</dbReference>
<dbReference type="SUPFAM" id="SSF53850">
    <property type="entry name" value="Periplasmic binding protein-like II"/>
    <property type="match status" value="1"/>
</dbReference>
<dbReference type="PROSITE" id="PS01037">
    <property type="entry name" value="SBP_BACTERIAL_1"/>
    <property type="match status" value="1"/>
</dbReference>